<protein>
    <recommendedName>
        <fullName evidence="3">Trans-3-hydroxy-L-proline dehydratase</fullName>
        <shortName>T3LHyp dehydratase</shortName>
        <shortName evidence="3">t3HypD</shortName>
        <ecNumber evidence="2">4.2.1.77</ecNumber>
    </recommendedName>
    <alternativeName>
        <fullName evidence="3">4-hydroxyproline 2-epimerase</fullName>
        <shortName>4Hyp 2-epimerase</shortName>
        <shortName evidence="3">4HypE</shortName>
        <ecNumber evidence="2">5.1.1.8</ecNumber>
    </alternativeName>
    <alternativeName>
        <fullName>Trans-L-3-hydroxyproline dehydratase</fullName>
    </alternativeName>
</protein>
<feature type="chain" id="PRO_0000432272" description="Trans-3-hydroxy-L-proline dehydratase">
    <location>
        <begin position="1"/>
        <end position="342"/>
    </location>
</feature>
<feature type="active site" description="Proton acceptor" evidence="1">
    <location>
        <position position="90"/>
    </location>
</feature>
<feature type="binding site" evidence="1">
    <location>
        <begin position="91"/>
        <end position="92"/>
    </location>
    <ligand>
        <name>substrate</name>
    </ligand>
</feature>
<feature type="binding site" evidence="1">
    <location>
        <position position="252"/>
    </location>
    <ligand>
        <name>substrate</name>
    </ligand>
</feature>
<feature type="binding site" evidence="1">
    <location>
        <begin position="257"/>
        <end position="258"/>
    </location>
    <ligand>
        <name>substrate</name>
    </ligand>
</feature>
<accession>A9CH01</accession>
<evidence type="ECO:0000250" key="1">
    <source>
        <dbReference type="UniProtKB" id="B9K4G4"/>
    </source>
</evidence>
<evidence type="ECO:0000269" key="2">
    <source>
    </source>
</evidence>
<evidence type="ECO:0000303" key="3">
    <source>
    </source>
</evidence>
<evidence type="ECO:0000305" key="4"/>
<evidence type="ECO:0000305" key="5">
    <source>
    </source>
</evidence>
<evidence type="ECO:0000312" key="6">
    <source>
        <dbReference type="EMBL" id="AAK88766.1"/>
    </source>
</evidence>
<sequence>MRSIKTVHVISAHAEGEVGDVIVGGVKPPPGETIWEQSRFIARDETLRNFVLNEPRGGVFRHVNLLVPPKHPDADAAFIIMEPEDTPPMSGSNSICVSTVLLDGGIVPMQEPETHMLLEAPGGLVKVRAECRNGKAERIFVQNLPSFAAKLDAELEVEGLGKLKVDTAYGGDSFVIVDAEAMGFSLKPEEAHEIARLGVRITNAANKALGFDHPENPDWRHFSFCLFAGKVERTAEGLRAGAAVAIQPGKVDRSPTGTALSARMAVLHARGEMKEGETLTAVSLIGSTFTGRILGTTTVGDRPAILPEISGRGWITGIHQHMLDPSDPWPEGYRLTDTWGAR</sequence>
<comment type="function">
    <text evidence="2 5">Catalyzes the dehydration of trans-3-hydroxy-L-proline (t3LHyp) to Delta(1)-pyrroline-2-carboxylate (Pyr2C). Can also catalyze the epimerization of trans-4-hydroxy-L-proline (t4LHyp) to cis-4-hydroxy-D-proline (c4DHyp), albeit with 30-fold lower efficiency. Is likely involved in both degradation pathways that convert t3LHyp to L-proline and t4LHyp to alpha-ketoglutarate, which would allow A.tumefaciens to grow on t3LHyp or t4LHyp as a sole carbon source. Displays no proline racemase activity.</text>
</comment>
<comment type="catalytic activity">
    <reaction evidence="2">
        <text>trans-3-hydroxy-L-proline = 1-pyrroline-2-carboxylate + H2O</text>
        <dbReference type="Rhea" id="RHEA:10320"/>
        <dbReference type="ChEBI" id="CHEBI:15377"/>
        <dbReference type="ChEBI" id="CHEBI:39785"/>
        <dbReference type="ChEBI" id="CHEBI:57938"/>
        <dbReference type="EC" id="4.2.1.77"/>
    </reaction>
</comment>
<comment type="catalytic activity">
    <reaction evidence="2">
        <text>trans-4-hydroxy-L-proline = cis-4-hydroxy-D-proline</text>
        <dbReference type="Rhea" id="RHEA:21152"/>
        <dbReference type="ChEBI" id="CHEBI:57690"/>
        <dbReference type="ChEBI" id="CHEBI:58375"/>
        <dbReference type="EC" id="5.1.1.8"/>
    </reaction>
</comment>
<comment type="biophysicochemical properties">
    <kinetics>
        <KM evidence="2">2 mM for trans-4-hydroxy-L-proline</KM>
        <KM evidence="2">4.2 mM for trans-3-hydroxy-L-proline</KM>
        <text evidence="2">kcat is 27 sec(-1) for t3LHyp dehydration. kcat is 0.40 sec(-1) for t4LHyp epimerization.</text>
    </kinetics>
</comment>
<comment type="induction">
    <text evidence="2">Is up-regulated when the bacterium is grown on t4LHyp or t3LHyp as sole carbon source.</text>
</comment>
<comment type="similarity">
    <text evidence="4">Belongs to the proline racemase family.</text>
</comment>
<reference key="1">
    <citation type="journal article" date="2001" name="Science">
        <title>The genome of the natural genetic engineer Agrobacterium tumefaciens C58.</title>
        <authorList>
            <person name="Wood D.W."/>
            <person name="Setubal J.C."/>
            <person name="Kaul R."/>
            <person name="Monks D.E."/>
            <person name="Kitajima J.P."/>
            <person name="Okura V.K."/>
            <person name="Zhou Y."/>
            <person name="Chen L."/>
            <person name="Wood G.E."/>
            <person name="Almeida N.F. Jr."/>
            <person name="Woo L."/>
            <person name="Chen Y."/>
            <person name="Paulsen I.T."/>
            <person name="Eisen J.A."/>
            <person name="Karp P.D."/>
            <person name="Bovee D. Sr."/>
            <person name="Chapman P."/>
            <person name="Clendenning J."/>
            <person name="Deatherage G."/>
            <person name="Gillet W."/>
            <person name="Grant C."/>
            <person name="Kutyavin T."/>
            <person name="Levy R."/>
            <person name="Li M.-J."/>
            <person name="McClelland E."/>
            <person name="Palmieri A."/>
            <person name="Raymond C."/>
            <person name="Rouse G."/>
            <person name="Saenphimmachak C."/>
            <person name="Wu Z."/>
            <person name="Romero P."/>
            <person name="Gordon D."/>
            <person name="Zhang S."/>
            <person name="Yoo H."/>
            <person name="Tao Y."/>
            <person name="Biddle P."/>
            <person name="Jung M."/>
            <person name="Krespan W."/>
            <person name="Perry M."/>
            <person name="Gordon-Kamm B."/>
            <person name="Liao L."/>
            <person name="Kim S."/>
            <person name="Hendrick C."/>
            <person name="Zhao Z.-Y."/>
            <person name="Dolan M."/>
            <person name="Chumley F."/>
            <person name="Tingey S.V."/>
            <person name="Tomb J.-F."/>
            <person name="Gordon M.P."/>
            <person name="Olson M.V."/>
            <person name="Nester E.W."/>
        </authorList>
    </citation>
    <scope>NUCLEOTIDE SEQUENCE [LARGE SCALE GENOMIC DNA]</scope>
    <source>
        <strain>C58 / ATCC 33970</strain>
    </source>
</reference>
<reference key="2">
    <citation type="journal article" date="2001" name="Science">
        <title>Genome sequence of the plant pathogen and biotechnology agent Agrobacterium tumefaciens C58.</title>
        <authorList>
            <person name="Goodner B."/>
            <person name="Hinkle G."/>
            <person name="Gattung S."/>
            <person name="Miller N."/>
            <person name="Blanchard M."/>
            <person name="Qurollo B."/>
            <person name="Goldman B.S."/>
            <person name="Cao Y."/>
            <person name="Askenazi M."/>
            <person name="Halling C."/>
            <person name="Mullin L."/>
            <person name="Houmiel K."/>
            <person name="Gordon J."/>
            <person name="Vaudin M."/>
            <person name="Iartchouk O."/>
            <person name="Epp A."/>
            <person name="Liu F."/>
            <person name="Wollam C."/>
            <person name="Allinger M."/>
            <person name="Doughty D."/>
            <person name="Scott C."/>
            <person name="Lappas C."/>
            <person name="Markelz B."/>
            <person name="Flanagan C."/>
            <person name="Crowell C."/>
            <person name="Gurson J."/>
            <person name="Lomo C."/>
            <person name="Sear C."/>
            <person name="Strub G."/>
            <person name="Cielo C."/>
            <person name="Slater S."/>
        </authorList>
    </citation>
    <scope>NUCLEOTIDE SEQUENCE [LARGE SCALE GENOMIC DNA]</scope>
    <source>
        <strain>C58 / ATCC 33970</strain>
    </source>
</reference>
<reference key="3">
    <citation type="journal article" date="2014" name="Elife">
        <title>Prediction and characterization of enzymatic activities guided by sequence similarity and genome neighborhood networks.</title>
        <authorList>
            <person name="Zhao S."/>
            <person name="Sakai A."/>
            <person name="Zhang X."/>
            <person name="Vetting M.W."/>
            <person name="Kumar R."/>
            <person name="Hillerich B."/>
            <person name="San Francisco B."/>
            <person name="Solbiati J."/>
            <person name="Steves A."/>
            <person name="Brown S."/>
            <person name="Akiva E."/>
            <person name="Barber A."/>
            <person name="Seidel R.D."/>
            <person name="Babbitt P.C."/>
            <person name="Almo S.C."/>
            <person name="Gerlt J.A."/>
            <person name="Jacobson M.P."/>
        </authorList>
    </citation>
    <scope>FUNCTION</scope>
    <scope>CATALYTIC ACTIVITY</scope>
    <scope>BIOPHYSICOCHEMICAL PROPERTIES</scope>
    <scope>INDUCTION</scope>
    <source>
        <strain>C58 / ATCC 33970</strain>
    </source>
</reference>
<dbReference type="EC" id="4.2.1.77" evidence="2"/>
<dbReference type="EC" id="5.1.1.8" evidence="2"/>
<dbReference type="EMBL" id="AE007870">
    <property type="protein sequence ID" value="AAK88766.1"/>
    <property type="molecule type" value="Genomic_DNA"/>
</dbReference>
<dbReference type="PIR" id="AH3132">
    <property type="entry name" value="AH3132"/>
</dbReference>
<dbReference type="PIR" id="D98155">
    <property type="entry name" value="D98155"/>
</dbReference>
<dbReference type="RefSeq" id="NP_355981.1">
    <property type="nucleotide sequence ID" value="NC_003063.2"/>
</dbReference>
<dbReference type="RefSeq" id="WP_006700304.1">
    <property type="nucleotide sequence ID" value="NC_003063.2"/>
</dbReference>
<dbReference type="SMR" id="A9CH01"/>
<dbReference type="STRING" id="176299.Atu4684"/>
<dbReference type="EnsemblBacteria" id="AAK88766">
    <property type="protein sequence ID" value="AAK88766"/>
    <property type="gene ID" value="Atu4684"/>
</dbReference>
<dbReference type="GeneID" id="61458143"/>
<dbReference type="KEGG" id="atu:Atu4684"/>
<dbReference type="PATRIC" id="fig|176299.10.peg.4488"/>
<dbReference type="eggNOG" id="COG3938">
    <property type="taxonomic scope" value="Bacteria"/>
</dbReference>
<dbReference type="HOGENOM" id="CLU_036729_2_0_5"/>
<dbReference type="OrthoDB" id="181267at2"/>
<dbReference type="PhylomeDB" id="A9CH01"/>
<dbReference type="BioCyc" id="AGRO:ATU4684-MONOMER"/>
<dbReference type="SABIO-RK" id="A9CH01"/>
<dbReference type="Proteomes" id="UP000000813">
    <property type="component" value="Chromosome linear"/>
</dbReference>
<dbReference type="GO" id="GO:0047580">
    <property type="term" value="F:4-hydroxyproline epimerase activity"/>
    <property type="evidence" value="ECO:0007669"/>
    <property type="project" value="UniProtKB-EC"/>
</dbReference>
<dbReference type="GO" id="GO:0050346">
    <property type="term" value="F:trans-L-3-hydroxyproline dehydratase activity"/>
    <property type="evidence" value="ECO:0000314"/>
    <property type="project" value="CACAO"/>
</dbReference>
<dbReference type="FunFam" id="3.10.310.10:FF:000010">
    <property type="entry name" value="Proline racemase"/>
    <property type="match status" value="1"/>
</dbReference>
<dbReference type="Gene3D" id="3.10.310.10">
    <property type="entry name" value="Diaminopimelate Epimerase, Chain A, domain 1"/>
    <property type="match status" value="2"/>
</dbReference>
<dbReference type="InterPro" id="IPR008794">
    <property type="entry name" value="Pro_racemase_fam"/>
</dbReference>
<dbReference type="NCBIfam" id="NF047722">
    <property type="entry name" value="T3LHypDht"/>
    <property type="match status" value="1"/>
</dbReference>
<dbReference type="PANTHER" id="PTHR33442:SF5">
    <property type="entry name" value="BIFUNCTIONAL TRANS-3-HYDROXY-L-PROLINE DEHYDRATASE_2-EPIMERASE"/>
    <property type="match status" value="1"/>
</dbReference>
<dbReference type="PANTHER" id="PTHR33442">
    <property type="entry name" value="TRANS-3-HYDROXY-L-PROLINE DEHYDRATASE"/>
    <property type="match status" value="1"/>
</dbReference>
<dbReference type="Pfam" id="PF05544">
    <property type="entry name" value="Pro_racemase"/>
    <property type="match status" value="1"/>
</dbReference>
<dbReference type="PIRSF" id="PIRSF029792">
    <property type="entry name" value="Pro_racemase"/>
    <property type="match status" value="1"/>
</dbReference>
<dbReference type="SFLD" id="SFLDS00028">
    <property type="entry name" value="Proline_Racemase"/>
    <property type="match status" value="1"/>
</dbReference>
<dbReference type="SUPFAM" id="SSF54506">
    <property type="entry name" value="Diaminopimelate epimerase-like"/>
    <property type="match status" value="1"/>
</dbReference>
<gene>
    <name evidence="6" type="ordered locus">Atu4684</name>
</gene>
<name>3HD4E_AGRFC</name>
<organism>
    <name type="scientific">Agrobacterium fabrum (strain C58 / ATCC 33970)</name>
    <name type="common">Agrobacterium tumefaciens (strain C58)</name>
    <dbReference type="NCBI Taxonomy" id="176299"/>
    <lineage>
        <taxon>Bacteria</taxon>
        <taxon>Pseudomonadati</taxon>
        <taxon>Pseudomonadota</taxon>
        <taxon>Alphaproteobacteria</taxon>
        <taxon>Hyphomicrobiales</taxon>
        <taxon>Rhizobiaceae</taxon>
        <taxon>Rhizobium/Agrobacterium group</taxon>
        <taxon>Agrobacterium</taxon>
        <taxon>Agrobacterium tumefaciens complex</taxon>
    </lineage>
</organism>
<keyword id="KW-0413">Isomerase</keyword>
<keyword id="KW-0456">Lyase</keyword>
<keyword id="KW-1185">Reference proteome</keyword>
<proteinExistence type="evidence at protein level"/>